<feature type="chain" id="PRO_0000046937" description="Flt3-interacting zinc finger protein 1">
    <location>
        <begin position="1"/>
        <end position="496"/>
    </location>
</feature>
<feature type="zinc finger region" description="C2H2-type 1" evidence="2">
    <location>
        <begin position="23"/>
        <end position="45"/>
    </location>
</feature>
<feature type="zinc finger region" description="C2H2-type 2" evidence="2">
    <location>
        <begin position="51"/>
        <end position="73"/>
    </location>
</feature>
<feature type="zinc finger region" description="C2H2-type 3" evidence="2">
    <location>
        <begin position="79"/>
        <end position="101"/>
    </location>
</feature>
<feature type="zinc finger region" description="C2H2-type 4" evidence="2">
    <location>
        <begin position="107"/>
        <end position="130"/>
    </location>
</feature>
<feature type="zinc finger region" description="C2H2-type 5" evidence="2">
    <location>
        <begin position="200"/>
        <end position="222"/>
    </location>
</feature>
<feature type="zinc finger region" description="C2H2-type 6" evidence="2">
    <location>
        <begin position="228"/>
        <end position="250"/>
    </location>
</feature>
<feature type="zinc finger region" description="C2H2-type 7" evidence="2">
    <location>
        <begin position="331"/>
        <end position="352"/>
    </location>
</feature>
<feature type="zinc finger region" description="C2H2-type 8" evidence="2">
    <location>
        <begin position="358"/>
        <end position="381"/>
    </location>
</feature>
<feature type="zinc finger region" description="C2H2-type 9" evidence="2">
    <location>
        <begin position="414"/>
        <end position="436"/>
    </location>
</feature>
<feature type="zinc finger region" description="C2H2-type 10" evidence="2">
    <location>
        <begin position="442"/>
        <end position="464"/>
    </location>
</feature>
<feature type="zinc finger region" description="C2H2-type 11" evidence="2">
    <location>
        <begin position="470"/>
        <end position="492"/>
    </location>
</feature>
<feature type="region of interest" description="Disordered" evidence="3">
    <location>
        <begin position="250"/>
        <end position="280"/>
    </location>
</feature>
<feature type="region of interest" description="Disordered" evidence="3">
    <location>
        <begin position="378"/>
        <end position="412"/>
    </location>
</feature>
<feature type="compositionally biased region" description="Low complexity" evidence="3">
    <location>
        <begin position="259"/>
        <end position="280"/>
    </location>
</feature>
<feature type="modified residue" description="N-acetylmethionine" evidence="9">
    <location>
        <position position="1"/>
    </location>
</feature>
<feature type="sequence variant" id="VAR_060269" description="In dbSNP:rs7247236." evidence="5 6 7">
    <original>T</original>
    <variation>A</variation>
    <location>
        <position position="391"/>
    </location>
</feature>
<feature type="sequence conflict" description="In Ref. 1; BAB55286." evidence="8" ref="1">
    <original>K</original>
    <variation>R</variation>
    <location>
        <position position="127"/>
    </location>
</feature>
<comment type="function">
    <text evidence="1">May be a transcriptional repressor of NRL function in photoreceptors. Does not repress CRX-mediated transactivation (By similarity).</text>
</comment>
<comment type="subunit">
    <text evidence="1">Interacts with FLT3 cytoplasmic catalytic domain, following receptor stimulation, in a kinase-independent manner. Does not interact with other structurally related receptor tyrosine kinases, including KIT, CSF1R and PDGFR. Interacts with NRL (By similarity).</text>
</comment>
<comment type="subcellular location">
    <subcellularLocation>
        <location evidence="1">Cytoplasm</location>
    </subcellularLocation>
    <subcellularLocation>
        <location evidence="1">Nucleus</location>
    </subcellularLocation>
</comment>
<comment type="tissue specificity">
    <text evidence="4">Widely expressed.</text>
</comment>
<comment type="sequence caution" evidence="8">
    <conflict type="erroneous initiation">
        <sequence resource="EMBL-CDS" id="BAD18728"/>
    </conflict>
    <text>Extended N-terminus.</text>
</comment>
<proteinExistence type="evidence at protein level"/>
<protein>
    <recommendedName>
        <fullName>Flt3-interacting zinc finger protein 1</fullName>
    </recommendedName>
    <alternativeName>
        <fullName>Zinc finger protein 798</fullName>
    </alternativeName>
</protein>
<accession>Q96SL8</accession>
<accession>A2RU72</accession>
<accession>Q6ZMJ7</accession>
<dbReference type="EMBL" id="AK027674">
    <property type="protein sequence ID" value="BAB55286.1"/>
    <property type="molecule type" value="mRNA"/>
</dbReference>
<dbReference type="EMBL" id="AK160385">
    <property type="protein sequence ID" value="BAD18728.1"/>
    <property type="status" value="ALT_INIT"/>
    <property type="molecule type" value="mRNA"/>
</dbReference>
<dbReference type="EMBL" id="AC008735">
    <property type="status" value="NOT_ANNOTATED_CDS"/>
    <property type="molecule type" value="Genomic_DNA"/>
</dbReference>
<dbReference type="EMBL" id="CH471135">
    <property type="protein sequence ID" value="EAW72392.1"/>
    <property type="molecule type" value="Genomic_DNA"/>
</dbReference>
<dbReference type="EMBL" id="BC132777">
    <property type="protein sequence ID" value="AAI32778.1"/>
    <property type="molecule type" value="mRNA"/>
</dbReference>
<dbReference type="EMBL" id="BC136512">
    <property type="protein sequence ID" value="AAI36513.1"/>
    <property type="molecule type" value="mRNA"/>
</dbReference>
<dbReference type="CCDS" id="CCDS12928.1"/>
<dbReference type="RefSeq" id="NP_116225.2">
    <property type="nucleotide sequence ID" value="NM_032836.3"/>
</dbReference>
<dbReference type="RefSeq" id="XP_005259409.1">
    <property type="nucleotide sequence ID" value="XM_005259352.5"/>
</dbReference>
<dbReference type="RefSeq" id="XP_047295520.1">
    <property type="nucleotide sequence ID" value="XM_047439564.1"/>
</dbReference>
<dbReference type="SMR" id="Q96SL8"/>
<dbReference type="BioGRID" id="124357">
    <property type="interactions" value="19"/>
</dbReference>
<dbReference type="FunCoup" id="Q96SL8">
    <property type="interactions" value="1269"/>
</dbReference>
<dbReference type="IntAct" id="Q96SL8">
    <property type="interactions" value="8"/>
</dbReference>
<dbReference type="MINT" id="Q96SL8"/>
<dbReference type="STRING" id="9606.ENSP00000221665"/>
<dbReference type="GlyGen" id="Q96SL8">
    <property type="glycosylation" value="1 site"/>
</dbReference>
<dbReference type="iPTMnet" id="Q96SL8"/>
<dbReference type="PhosphoSitePlus" id="Q96SL8"/>
<dbReference type="BioMuta" id="FIZ1"/>
<dbReference type="DMDM" id="296434506"/>
<dbReference type="jPOST" id="Q96SL8"/>
<dbReference type="MassIVE" id="Q96SL8"/>
<dbReference type="PaxDb" id="9606-ENSP00000221665"/>
<dbReference type="PeptideAtlas" id="Q96SL8"/>
<dbReference type="ProteomicsDB" id="78127"/>
<dbReference type="Pumba" id="Q96SL8"/>
<dbReference type="Antibodypedia" id="33128">
    <property type="antibodies" value="148 antibodies from 23 providers"/>
</dbReference>
<dbReference type="DNASU" id="84922"/>
<dbReference type="Ensembl" id="ENST00000221665.5">
    <property type="protein sequence ID" value="ENSP00000221665.2"/>
    <property type="gene ID" value="ENSG00000179943.8"/>
</dbReference>
<dbReference type="GeneID" id="84922"/>
<dbReference type="KEGG" id="hsa:84922"/>
<dbReference type="MANE-Select" id="ENST00000221665.5">
    <property type="protein sequence ID" value="ENSP00000221665.2"/>
    <property type="RefSeq nucleotide sequence ID" value="NM_032836.3"/>
    <property type="RefSeq protein sequence ID" value="NP_116225.2"/>
</dbReference>
<dbReference type="UCSC" id="uc002qli.4">
    <property type="organism name" value="human"/>
</dbReference>
<dbReference type="AGR" id="HGNC:25917"/>
<dbReference type="CTD" id="84922"/>
<dbReference type="DisGeNET" id="84922"/>
<dbReference type="GeneCards" id="FIZ1"/>
<dbReference type="HGNC" id="HGNC:25917">
    <property type="gene designation" value="FIZ1"/>
</dbReference>
<dbReference type="HPA" id="ENSG00000179943">
    <property type="expression patterns" value="Low tissue specificity"/>
</dbReference>
<dbReference type="MIM" id="609133">
    <property type="type" value="gene"/>
</dbReference>
<dbReference type="neXtProt" id="NX_Q96SL8"/>
<dbReference type="OpenTargets" id="ENSG00000179943"/>
<dbReference type="PharmGKB" id="PA162388597"/>
<dbReference type="VEuPathDB" id="HostDB:ENSG00000179943"/>
<dbReference type="eggNOG" id="KOG1721">
    <property type="taxonomic scope" value="Eukaryota"/>
</dbReference>
<dbReference type="GeneTree" id="ENSGT00940000153306"/>
<dbReference type="HOGENOM" id="CLU_047914_0_0_1"/>
<dbReference type="InParanoid" id="Q96SL8"/>
<dbReference type="OMA" id="SLYQCEC"/>
<dbReference type="OrthoDB" id="3437960at2759"/>
<dbReference type="PAN-GO" id="Q96SL8">
    <property type="GO annotations" value="0 GO annotations based on evolutionary models"/>
</dbReference>
<dbReference type="PhylomeDB" id="Q96SL8"/>
<dbReference type="TreeFam" id="TF337381"/>
<dbReference type="PathwayCommons" id="Q96SL8"/>
<dbReference type="SignaLink" id="Q96SL8"/>
<dbReference type="SIGNOR" id="Q96SL8"/>
<dbReference type="BioGRID-ORCS" id="84922">
    <property type="hits" value="13 hits in 1181 CRISPR screens"/>
</dbReference>
<dbReference type="GenomeRNAi" id="84922"/>
<dbReference type="Pharos" id="Q96SL8">
    <property type="development level" value="Tdark"/>
</dbReference>
<dbReference type="PRO" id="PR:Q96SL8"/>
<dbReference type="Proteomes" id="UP000005640">
    <property type="component" value="Chromosome 19"/>
</dbReference>
<dbReference type="RNAct" id="Q96SL8">
    <property type="molecule type" value="protein"/>
</dbReference>
<dbReference type="Bgee" id="ENSG00000179943">
    <property type="expression patterns" value="Expressed in cardiac muscle of right atrium and 171 other cell types or tissues"/>
</dbReference>
<dbReference type="ExpressionAtlas" id="Q96SL8">
    <property type="expression patterns" value="baseline and differential"/>
</dbReference>
<dbReference type="GO" id="GO:0000785">
    <property type="term" value="C:chromatin"/>
    <property type="evidence" value="ECO:0000250"/>
    <property type="project" value="ARUK-UCL"/>
</dbReference>
<dbReference type="GO" id="GO:0005737">
    <property type="term" value="C:cytoplasm"/>
    <property type="evidence" value="ECO:0000250"/>
    <property type="project" value="UniProtKB"/>
</dbReference>
<dbReference type="GO" id="GO:0005634">
    <property type="term" value="C:nucleus"/>
    <property type="evidence" value="ECO:0000250"/>
    <property type="project" value="UniProtKB"/>
</dbReference>
<dbReference type="GO" id="GO:0030971">
    <property type="term" value="F:receptor tyrosine kinase binding"/>
    <property type="evidence" value="ECO:0000250"/>
    <property type="project" value="UniProtKB"/>
</dbReference>
<dbReference type="GO" id="GO:0061629">
    <property type="term" value="F:RNA polymerase II-specific DNA-binding transcription factor binding"/>
    <property type="evidence" value="ECO:0000250"/>
    <property type="project" value="ARUK-UCL"/>
</dbReference>
<dbReference type="GO" id="GO:0003713">
    <property type="term" value="F:transcription coactivator activity"/>
    <property type="evidence" value="ECO:0000250"/>
    <property type="project" value="ARUK-UCL"/>
</dbReference>
<dbReference type="GO" id="GO:0008270">
    <property type="term" value="F:zinc ion binding"/>
    <property type="evidence" value="ECO:0007669"/>
    <property type="project" value="UniProtKB-KW"/>
</dbReference>
<dbReference type="GO" id="GO:0045944">
    <property type="term" value="P:positive regulation of transcription by RNA polymerase II"/>
    <property type="evidence" value="ECO:0000250"/>
    <property type="project" value="ARUK-UCL"/>
</dbReference>
<dbReference type="FunFam" id="3.30.160.60:FF:000621">
    <property type="entry name" value="FLT3-interacting zinc finger 1"/>
    <property type="match status" value="1"/>
</dbReference>
<dbReference type="FunFam" id="3.30.160.60:FF:002277">
    <property type="entry name" value="FLT3-interacting zinc finger 1"/>
    <property type="match status" value="1"/>
</dbReference>
<dbReference type="FunFam" id="3.30.160.60:FF:001365">
    <property type="entry name" value="Flt3-interacting zinc finger protein 1"/>
    <property type="match status" value="1"/>
</dbReference>
<dbReference type="FunFam" id="3.30.160.60:FF:001711">
    <property type="entry name" value="Flt3-interacting zinc finger protein 1"/>
    <property type="match status" value="1"/>
</dbReference>
<dbReference type="FunFam" id="3.30.160.60:FF:001859">
    <property type="entry name" value="Flt3-interacting zinc finger protein 1"/>
    <property type="match status" value="1"/>
</dbReference>
<dbReference type="FunFam" id="3.30.160.60:FF:000790">
    <property type="entry name" value="flt3-interacting zinc finger protein 1"/>
    <property type="match status" value="2"/>
</dbReference>
<dbReference type="FunFam" id="3.30.160.60:FF:000446">
    <property type="entry name" value="Zinc finger protein"/>
    <property type="match status" value="1"/>
</dbReference>
<dbReference type="FunFam" id="3.30.160.60:FF:000286">
    <property type="entry name" value="Zinc finger protein 770"/>
    <property type="match status" value="1"/>
</dbReference>
<dbReference type="Gene3D" id="3.30.160.60">
    <property type="entry name" value="Classic Zinc Finger"/>
    <property type="match status" value="9"/>
</dbReference>
<dbReference type="InterPro" id="IPR056436">
    <property type="entry name" value="Znf-C2H2_ZIC1-5/GLI1-3-like"/>
</dbReference>
<dbReference type="InterPro" id="IPR036236">
    <property type="entry name" value="Znf_C2H2_sf"/>
</dbReference>
<dbReference type="InterPro" id="IPR013087">
    <property type="entry name" value="Znf_C2H2_type"/>
</dbReference>
<dbReference type="PANTHER" id="PTHR24394:SF29">
    <property type="entry name" value="MYONEURIN"/>
    <property type="match status" value="1"/>
</dbReference>
<dbReference type="PANTHER" id="PTHR24394">
    <property type="entry name" value="ZINC FINGER PROTEIN"/>
    <property type="match status" value="1"/>
</dbReference>
<dbReference type="Pfam" id="PF00096">
    <property type="entry name" value="zf-C2H2"/>
    <property type="match status" value="5"/>
</dbReference>
<dbReference type="Pfam" id="PF23561">
    <property type="entry name" value="zf-C2H2_15"/>
    <property type="match status" value="1"/>
</dbReference>
<dbReference type="SMART" id="SM00355">
    <property type="entry name" value="ZnF_C2H2"/>
    <property type="match status" value="11"/>
</dbReference>
<dbReference type="SUPFAM" id="SSF57667">
    <property type="entry name" value="beta-beta-alpha zinc fingers"/>
    <property type="match status" value="6"/>
</dbReference>
<dbReference type="PROSITE" id="PS00028">
    <property type="entry name" value="ZINC_FINGER_C2H2_1"/>
    <property type="match status" value="10"/>
</dbReference>
<dbReference type="PROSITE" id="PS50157">
    <property type="entry name" value="ZINC_FINGER_C2H2_2"/>
    <property type="match status" value="11"/>
</dbReference>
<keyword id="KW-0007">Acetylation</keyword>
<keyword id="KW-0963">Cytoplasm</keyword>
<keyword id="KW-0479">Metal-binding</keyword>
<keyword id="KW-0539">Nucleus</keyword>
<keyword id="KW-1267">Proteomics identification</keyword>
<keyword id="KW-1185">Reference proteome</keyword>
<keyword id="KW-0677">Repeat</keyword>
<keyword id="KW-0678">Repressor</keyword>
<keyword id="KW-0804">Transcription</keyword>
<keyword id="KW-0805">Transcription regulation</keyword>
<keyword id="KW-0862">Zinc</keyword>
<keyword id="KW-0863">Zinc-finger</keyword>
<sequence length="496" mass="51996">MDDVPAPTPAPAPPAAAAPRVPFHCSECGKSFRYRSDLRRHFARHTALKPHACPRCGKGFKHSFNLANHLRSHTGERPYRCSACPKGFRDSTGLLHHQVVHTGEKPYCCLVCELRFSSRSSLGRHLKRQHRGVLPSPLQPGPGLPALSAPCSVCCNVGPCSVCGGSGAGGGEGPEGAGAGLGSWGLAEAAAAAAASLPPFACGACARRFDHGRELAAHWAAHTDVKPFKCPRCERDFNAPALLERHKLTHDLQGPGAPPAQAWAAGPGAGPETAGEGTAAEAGDAPLASDRRLLLGPAGGGVPKLGGLLPEGGGEAPAPAAAAEPSEDTLYQCDCGTFFASAAALASHLEAHSGPATYGCGHCGALYAALAALEEHRRVSHGEGGGEEAATAAREREPASGEPPSGSGRGKKIFGCSECEKLFRSPRDLERHVLVHTGEKPFPCLECGKFFRHECYLKRHRLLHGTERPFPCHICGKGFITLSNLSRHLKLHRGMD</sequence>
<name>FIZ1_HUMAN</name>
<gene>
    <name type="primary">FIZ1</name>
    <name type="synonym">ZNF798</name>
</gene>
<reference key="1">
    <citation type="journal article" date="2004" name="Nat. Genet.">
        <title>Complete sequencing and characterization of 21,243 full-length human cDNAs.</title>
        <authorList>
            <person name="Ota T."/>
            <person name="Suzuki Y."/>
            <person name="Nishikawa T."/>
            <person name="Otsuki T."/>
            <person name="Sugiyama T."/>
            <person name="Irie R."/>
            <person name="Wakamatsu A."/>
            <person name="Hayashi K."/>
            <person name="Sato H."/>
            <person name="Nagai K."/>
            <person name="Kimura K."/>
            <person name="Makita H."/>
            <person name="Sekine M."/>
            <person name="Obayashi M."/>
            <person name="Nishi T."/>
            <person name="Shibahara T."/>
            <person name="Tanaka T."/>
            <person name="Ishii S."/>
            <person name="Yamamoto J."/>
            <person name="Saito K."/>
            <person name="Kawai Y."/>
            <person name="Isono Y."/>
            <person name="Nakamura Y."/>
            <person name="Nagahari K."/>
            <person name="Murakami K."/>
            <person name="Yasuda T."/>
            <person name="Iwayanagi T."/>
            <person name="Wagatsuma M."/>
            <person name="Shiratori A."/>
            <person name="Sudo H."/>
            <person name="Hosoiri T."/>
            <person name="Kaku Y."/>
            <person name="Kodaira H."/>
            <person name="Kondo H."/>
            <person name="Sugawara M."/>
            <person name="Takahashi M."/>
            <person name="Kanda K."/>
            <person name="Yokoi T."/>
            <person name="Furuya T."/>
            <person name="Kikkawa E."/>
            <person name="Omura Y."/>
            <person name="Abe K."/>
            <person name="Kamihara K."/>
            <person name="Katsuta N."/>
            <person name="Sato K."/>
            <person name="Tanikawa M."/>
            <person name="Yamazaki M."/>
            <person name="Ninomiya K."/>
            <person name="Ishibashi T."/>
            <person name="Yamashita H."/>
            <person name="Murakawa K."/>
            <person name="Fujimori K."/>
            <person name="Tanai H."/>
            <person name="Kimata M."/>
            <person name="Watanabe M."/>
            <person name="Hiraoka S."/>
            <person name="Chiba Y."/>
            <person name="Ishida S."/>
            <person name="Ono Y."/>
            <person name="Takiguchi S."/>
            <person name="Watanabe S."/>
            <person name="Yosida M."/>
            <person name="Hotuta T."/>
            <person name="Kusano J."/>
            <person name="Kanehori K."/>
            <person name="Takahashi-Fujii A."/>
            <person name="Hara H."/>
            <person name="Tanase T.-O."/>
            <person name="Nomura Y."/>
            <person name="Togiya S."/>
            <person name="Komai F."/>
            <person name="Hara R."/>
            <person name="Takeuchi K."/>
            <person name="Arita M."/>
            <person name="Imose N."/>
            <person name="Musashino K."/>
            <person name="Yuuki H."/>
            <person name="Oshima A."/>
            <person name="Sasaki N."/>
            <person name="Aotsuka S."/>
            <person name="Yoshikawa Y."/>
            <person name="Matsunawa H."/>
            <person name="Ichihara T."/>
            <person name="Shiohata N."/>
            <person name="Sano S."/>
            <person name="Moriya S."/>
            <person name="Momiyama H."/>
            <person name="Satoh N."/>
            <person name="Takami S."/>
            <person name="Terashima Y."/>
            <person name="Suzuki O."/>
            <person name="Nakagawa S."/>
            <person name="Senoh A."/>
            <person name="Mizoguchi H."/>
            <person name="Goto Y."/>
            <person name="Shimizu F."/>
            <person name="Wakebe H."/>
            <person name="Hishigaki H."/>
            <person name="Watanabe T."/>
            <person name="Sugiyama A."/>
            <person name="Takemoto M."/>
            <person name="Kawakami B."/>
            <person name="Yamazaki M."/>
            <person name="Watanabe K."/>
            <person name="Kumagai A."/>
            <person name="Itakura S."/>
            <person name="Fukuzumi Y."/>
            <person name="Fujimori Y."/>
            <person name="Komiyama M."/>
            <person name="Tashiro H."/>
            <person name="Tanigami A."/>
            <person name="Fujiwara T."/>
            <person name="Ono T."/>
            <person name="Yamada K."/>
            <person name="Fujii Y."/>
            <person name="Ozaki K."/>
            <person name="Hirao M."/>
            <person name="Ohmori Y."/>
            <person name="Kawabata A."/>
            <person name="Hikiji T."/>
            <person name="Kobatake N."/>
            <person name="Inagaki H."/>
            <person name="Ikema Y."/>
            <person name="Okamoto S."/>
            <person name="Okitani R."/>
            <person name="Kawakami T."/>
            <person name="Noguchi S."/>
            <person name="Itoh T."/>
            <person name="Shigeta K."/>
            <person name="Senba T."/>
            <person name="Matsumura K."/>
            <person name="Nakajima Y."/>
            <person name="Mizuno T."/>
            <person name="Morinaga M."/>
            <person name="Sasaki M."/>
            <person name="Togashi T."/>
            <person name="Oyama M."/>
            <person name="Hata H."/>
            <person name="Watanabe M."/>
            <person name="Komatsu T."/>
            <person name="Mizushima-Sugano J."/>
            <person name="Satoh T."/>
            <person name="Shirai Y."/>
            <person name="Takahashi Y."/>
            <person name="Nakagawa K."/>
            <person name="Okumura K."/>
            <person name="Nagase T."/>
            <person name="Nomura N."/>
            <person name="Kikuchi H."/>
            <person name="Masuho Y."/>
            <person name="Yamashita R."/>
            <person name="Nakai K."/>
            <person name="Yada T."/>
            <person name="Nakamura Y."/>
            <person name="Ohara O."/>
            <person name="Isogai T."/>
            <person name="Sugano S."/>
        </authorList>
    </citation>
    <scope>NUCLEOTIDE SEQUENCE [LARGE SCALE MRNA]</scope>
    <scope>VARIANT ALA-391</scope>
    <source>
        <tissue>Spleen</tissue>
        <tissue>Teratocarcinoma</tissue>
    </source>
</reference>
<reference key="2">
    <citation type="journal article" date="2004" name="Nature">
        <title>The DNA sequence and biology of human chromosome 19.</title>
        <authorList>
            <person name="Grimwood J."/>
            <person name="Gordon L.A."/>
            <person name="Olsen A.S."/>
            <person name="Terry A."/>
            <person name="Schmutz J."/>
            <person name="Lamerdin J.E."/>
            <person name="Hellsten U."/>
            <person name="Goodstein D."/>
            <person name="Couronne O."/>
            <person name="Tran-Gyamfi M."/>
            <person name="Aerts A."/>
            <person name="Altherr M."/>
            <person name="Ashworth L."/>
            <person name="Bajorek E."/>
            <person name="Black S."/>
            <person name="Branscomb E."/>
            <person name="Caenepeel S."/>
            <person name="Carrano A.V."/>
            <person name="Caoile C."/>
            <person name="Chan Y.M."/>
            <person name="Christensen M."/>
            <person name="Cleland C.A."/>
            <person name="Copeland A."/>
            <person name="Dalin E."/>
            <person name="Dehal P."/>
            <person name="Denys M."/>
            <person name="Detter J.C."/>
            <person name="Escobar J."/>
            <person name="Flowers D."/>
            <person name="Fotopulos D."/>
            <person name="Garcia C."/>
            <person name="Georgescu A.M."/>
            <person name="Glavina T."/>
            <person name="Gomez M."/>
            <person name="Gonzales E."/>
            <person name="Groza M."/>
            <person name="Hammon N."/>
            <person name="Hawkins T."/>
            <person name="Haydu L."/>
            <person name="Ho I."/>
            <person name="Huang W."/>
            <person name="Israni S."/>
            <person name="Jett J."/>
            <person name="Kadner K."/>
            <person name="Kimball H."/>
            <person name="Kobayashi A."/>
            <person name="Larionov V."/>
            <person name="Leem S.-H."/>
            <person name="Lopez F."/>
            <person name="Lou Y."/>
            <person name="Lowry S."/>
            <person name="Malfatti S."/>
            <person name="Martinez D."/>
            <person name="McCready P.M."/>
            <person name="Medina C."/>
            <person name="Morgan J."/>
            <person name="Nelson K."/>
            <person name="Nolan M."/>
            <person name="Ovcharenko I."/>
            <person name="Pitluck S."/>
            <person name="Pollard M."/>
            <person name="Popkie A.P."/>
            <person name="Predki P."/>
            <person name="Quan G."/>
            <person name="Ramirez L."/>
            <person name="Rash S."/>
            <person name="Retterer J."/>
            <person name="Rodriguez A."/>
            <person name="Rogers S."/>
            <person name="Salamov A."/>
            <person name="Salazar A."/>
            <person name="She X."/>
            <person name="Smith D."/>
            <person name="Slezak T."/>
            <person name="Solovyev V."/>
            <person name="Thayer N."/>
            <person name="Tice H."/>
            <person name="Tsai M."/>
            <person name="Ustaszewska A."/>
            <person name="Vo N."/>
            <person name="Wagner M."/>
            <person name="Wheeler J."/>
            <person name="Wu K."/>
            <person name="Xie G."/>
            <person name="Yang J."/>
            <person name="Dubchak I."/>
            <person name="Furey T.S."/>
            <person name="DeJong P."/>
            <person name="Dickson M."/>
            <person name="Gordon D."/>
            <person name="Eichler E.E."/>
            <person name="Pennacchio L.A."/>
            <person name="Richardson P."/>
            <person name="Stubbs L."/>
            <person name="Rokhsar D.S."/>
            <person name="Myers R.M."/>
            <person name="Rubin E.M."/>
            <person name="Lucas S.M."/>
        </authorList>
    </citation>
    <scope>NUCLEOTIDE SEQUENCE [LARGE SCALE GENOMIC DNA]</scope>
</reference>
<reference key="3">
    <citation type="submission" date="2005-09" db="EMBL/GenBank/DDBJ databases">
        <authorList>
            <person name="Mural R.J."/>
            <person name="Istrail S."/>
            <person name="Sutton G.G."/>
            <person name="Florea L."/>
            <person name="Halpern A.L."/>
            <person name="Mobarry C.M."/>
            <person name="Lippert R."/>
            <person name="Walenz B."/>
            <person name="Shatkay H."/>
            <person name="Dew I."/>
            <person name="Miller J.R."/>
            <person name="Flanigan M.J."/>
            <person name="Edwards N.J."/>
            <person name="Bolanos R."/>
            <person name="Fasulo D."/>
            <person name="Halldorsson B.V."/>
            <person name="Hannenhalli S."/>
            <person name="Turner R."/>
            <person name="Yooseph S."/>
            <person name="Lu F."/>
            <person name="Nusskern D.R."/>
            <person name="Shue B.C."/>
            <person name="Zheng X.H."/>
            <person name="Zhong F."/>
            <person name="Delcher A.L."/>
            <person name="Huson D.H."/>
            <person name="Kravitz S.A."/>
            <person name="Mouchard L."/>
            <person name="Reinert K."/>
            <person name="Remington K.A."/>
            <person name="Clark A.G."/>
            <person name="Waterman M.S."/>
            <person name="Eichler E.E."/>
            <person name="Adams M.D."/>
            <person name="Hunkapiller M.W."/>
            <person name="Myers E.W."/>
            <person name="Venter J.C."/>
        </authorList>
    </citation>
    <scope>NUCLEOTIDE SEQUENCE [LARGE SCALE GENOMIC DNA]</scope>
    <scope>VARIANT ALA-391</scope>
</reference>
<reference key="4">
    <citation type="journal article" date="2004" name="Genome Res.">
        <title>The status, quality, and expansion of the NIH full-length cDNA project: the Mammalian Gene Collection (MGC).</title>
        <authorList>
            <consortium name="The MGC Project Team"/>
        </authorList>
    </citation>
    <scope>NUCLEOTIDE SEQUENCE [LARGE SCALE MRNA]</scope>
    <scope>VARIANT ALA-391</scope>
    <source>
        <tissue>Brain</tissue>
    </source>
</reference>
<reference key="5">
    <citation type="journal article" date="2003" name="Hum. Mol. Genet.">
        <title>Interaction of retinal bZIP transcription factor NRL with Flt3-interacting zinc-finger protein Fiz1: possible role of Fiz1 as a transcriptional repressor.</title>
        <authorList>
            <person name="Mitton K.P."/>
            <person name="Swain P.K."/>
            <person name="Khanna H."/>
            <person name="Dowd M."/>
            <person name="Apel I.J."/>
            <person name="Swaroop A."/>
        </authorList>
    </citation>
    <scope>TISSUE SPECIFICITY</scope>
</reference>
<reference key="6">
    <citation type="journal article" date="2012" name="Proc. Natl. Acad. Sci. U.S.A.">
        <title>N-terminal acetylome analyses and functional insights of the N-terminal acetyltransferase NatB.</title>
        <authorList>
            <person name="Van Damme P."/>
            <person name="Lasa M."/>
            <person name="Polevoda B."/>
            <person name="Gazquez C."/>
            <person name="Elosegui-Artola A."/>
            <person name="Kim D.S."/>
            <person name="De Juan-Pardo E."/>
            <person name="Demeyer K."/>
            <person name="Hole K."/>
            <person name="Larrea E."/>
            <person name="Timmerman E."/>
            <person name="Prieto J."/>
            <person name="Arnesen T."/>
            <person name="Sherman F."/>
            <person name="Gevaert K."/>
            <person name="Aldabe R."/>
        </authorList>
    </citation>
    <scope>ACETYLATION [LARGE SCALE ANALYSIS] AT MET-1</scope>
    <scope>IDENTIFICATION BY MASS SPECTROMETRY [LARGE SCALE ANALYSIS]</scope>
</reference>
<organism>
    <name type="scientific">Homo sapiens</name>
    <name type="common">Human</name>
    <dbReference type="NCBI Taxonomy" id="9606"/>
    <lineage>
        <taxon>Eukaryota</taxon>
        <taxon>Metazoa</taxon>
        <taxon>Chordata</taxon>
        <taxon>Craniata</taxon>
        <taxon>Vertebrata</taxon>
        <taxon>Euteleostomi</taxon>
        <taxon>Mammalia</taxon>
        <taxon>Eutheria</taxon>
        <taxon>Euarchontoglires</taxon>
        <taxon>Primates</taxon>
        <taxon>Haplorrhini</taxon>
        <taxon>Catarrhini</taxon>
        <taxon>Hominidae</taxon>
        <taxon>Homo</taxon>
    </lineage>
</organism>
<evidence type="ECO:0000250" key="1"/>
<evidence type="ECO:0000255" key="2">
    <source>
        <dbReference type="PROSITE-ProRule" id="PRU00042"/>
    </source>
</evidence>
<evidence type="ECO:0000256" key="3">
    <source>
        <dbReference type="SAM" id="MobiDB-lite"/>
    </source>
</evidence>
<evidence type="ECO:0000269" key="4">
    <source>
    </source>
</evidence>
<evidence type="ECO:0000269" key="5">
    <source>
    </source>
</evidence>
<evidence type="ECO:0000269" key="6">
    <source>
    </source>
</evidence>
<evidence type="ECO:0000269" key="7">
    <source ref="3"/>
</evidence>
<evidence type="ECO:0000305" key="8"/>
<evidence type="ECO:0007744" key="9">
    <source>
    </source>
</evidence>